<protein>
    <recommendedName>
        <fullName>Minor capsid protein VP2</fullName>
    </recommendedName>
</protein>
<feature type="chain" id="PRO_0000100122" description="Minor capsid protein VP2">
    <location>
        <begin position="1"/>
        <end position="106"/>
    </location>
</feature>
<comment type="function">
    <text evidence="1">Minor structural protein that forms a portal-like structure at a unique three-fold axis of symmetry, following binding to the host receptor. The virion attaches to feline junctional adhesion molecule A (F11R). Once attached, the virion is endocytosed. Acidification of the endosome induces conformational change of capsid protein thereby injecting virus genomic RNA into host cytoplasm. The channel formed by VP2 may allow the delivery of the viral genome through the host endosomal membrane.</text>
</comment>
<comment type="subunit">
    <text evidence="1">Homooligomer. The portal-like structure consists in 12 copies of VP2. Interacts with capsid protein VP1.</text>
</comment>
<comment type="subcellular location">
    <subcellularLocation>
        <location evidence="1">Virion</location>
    </subcellularLocation>
    <subcellularLocation>
        <location evidence="2">Host cytoplasm</location>
    </subcellularLocation>
</comment>
<comment type="domain">
    <text evidence="1">The N-terminus domain points away from the virion surface.</text>
</comment>
<comment type="miscellaneous">
    <text evidence="1">Translated by a ribosomal termination-reinitiation process from the bicistronic mRNA coding for VP1 and VP2.</text>
</comment>
<comment type="similarity">
    <text evidence="2">Belongs to the vesivirus VP2 protein family.</text>
</comment>
<name>VP2_FCVC6</name>
<keyword id="KW-1232">Capsid decoration protein</keyword>
<keyword id="KW-0167">Capsid protein</keyword>
<keyword id="KW-1035">Host cytoplasm</keyword>
<keyword id="KW-0946">Virion</keyword>
<evidence type="ECO:0000250" key="1">
    <source>
        <dbReference type="UniProtKB" id="P28711"/>
    </source>
</evidence>
<evidence type="ECO:0000305" key="2"/>
<reference key="1">
    <citation type="journal article" date="1991" name="J. Virol.">
        <title>Nucleotide sequence and expression of the capsid protein gene of feline calicivirus.</title>
        <authorList>
            <person name="Neill J.D."/>
            <person name="Reardon I.M."/>
            <person name="Heinrikson R.L."/>
        </authorList>
    </citation>
    <scope>NUCLEOTIDE SEQUENCE [GENOMIC RNA]</scope>
</reference>
<reference key="2">
    <citation type="submission" date="1994-09" db="EMBL/GenBank/DDBJ databases">
        <authorList>
            <person name="Neill J.D."/>
        </authorList>
    </citation>
    <scope>NUCLEOTIDE SEQUENCE [GENOMIC RNA]</scope>
</reference>
<proteinExistence type="inferred from homology"/>
<dbReference type="EMBL" id="M32819">
    <property type="protein sequence ID" value="AAA42926.1"/>
    <property type="molecule type" value="Genomic_RNA"/>
</dbReference>
<dbReference type="EMBL" id="U13992">
    <property type="protein sequence ID" value="AAC13994.1"/>
    <property type="molecule type" value="Genomic_RNA"/>
</dbReference>
<dbReference type="PIR" id="T09247">
    <property type="entry name" value="T09247"/>
</dbReference>
<dbReference type="SMR" id="P28709"/>
<dbReference type="Proteomes" id="UP000008667">
    <property type="component" value="Genome"/>
</dbReference>
<dbReference type="GO" id="GO:0030430">
    <property type="term" value="C:host cell cytoplasm"/>
    <property type="evidence" value="ECO:0007669"/>
    <property type="project" value="UniProtKB-SubCell"/>
</dbReference>
<dbReference type="GO" id="GO:0098021">
    <property type="term" value="C:viral capsid, decoration"/>
    <property type="evidence" value="ECO:0007669"/>
    <property type="project" value="UniProtKB-KW"/>
</dbReference>
<dbReference type="InterPro" id="IPR007996">
    <property type="entry name" value="Vesivirus_VP2"/>
</dbReference>
<dbReference type="Pfam" id="PF05332">
    <property type="entry name" value="Vesi_VP2"/>
    <property type="match status" value="1"/>
</dbReference>
<organism>
    <name type="scientific">Feline calicivirus (strain CFI/68 FIV)</name>
    <name type="common">FCV</name>
    <dbReference type="NCBI Taxonomy" id="11979"/>
    <lineage>
        <taxon>Viruses</taxon>
        <taxon>Riboviria</taxon>
        <taxon>Orthornavirae</taxon>
        <taxon>Pisuviricota</taxon>
        <taxon>Pisoniviricetes</taxon>
        <taxon>Picornavirales</taxon>
        <taxon>Caliciviridae</taxon>
        <taxon>Vesivirus</taxon>
        <taxon>Feline calicivirus</taxon>
    </lineage>
</organism>
<accession>P28709</accession>
<gene>
    <name type="ORF">ORF3</name>
</gene>
<sequence length="106" mass="12199">MNSILGLIDTVTNTIGKAQQIELDKAALGQQRELALQRMNLDRQALNNQVEQFNKLLEQRVQGPIQSVRLARAAGFRVDPYSYTNQNFYDDQLNAIRLSYRNLFKN</sequence>
<organismHost>
    <name type="scientific">Felidae</name>
    <name type="common">cat family</name>
    <dbReference type="NCBI Taxonomy" id="9681"/>
</organismHost>